<proteinExistence type="inferred from homology"/>
<organism>
    <name type="scientific">Lactobacillus acidophilus (strain ATCC 700396 / NCK56 / N2 / NCFM)</name>
    <dbReference type="NCBI Taxonomy" id="272621"/>
    <lineage>
        <taxon>Bacteria</taxon>
        <taxon>Bacillati</taxon>
        <taxon>Bacillota</taxon>
        <taxon>Bacilli</taxon>
        <taxon>Lactobacillales</taxon>
        <taxon>Lactobacillaceae</taxon>
        <taxon>Lactobacillus</taxon>
    </lineage>
</organism>
<comment type="function">
    <text evidence="1">Catalyzes the initial step of the lipid cycle reactions in the biosynthesis of the cell wall peptidoglycan: transfers peptidoglycan precursor phospho-MurNAc-pentapeptide from UDP-MurNAc-pentapeptide onto the lipid carrier undecaprenyl phosphate, yielding undecaprenyl-pyrophosphoryl-MurNAc-pentapeptide, known as lipid I.</text>
</comment>
<comment type="catalytic activity">
    <reaction evidence="1">
        <text>UDP-N-acetyl-alpha-D-muramoyl-L-alanyl-gamma-D-glutamyl-L-lysyl-D-alanyl-D-alanine + di-trans,octa-cis-undecaprenyl phosphate = Mur2Ac(oyl-L-Ala-gamma-D-Glu-L-Lys-D-Ala-D-Ala)-di-trans,octa-cis-undecaprenyl diphosphate + UMP</text>
        <dbReference type="Rhea" id="RHEA:21920"/>
        <dbReference type="ChEBI" id="CHEBI:57865"/>
        <dbReference type="ChEBI" id="CHEBI:60032"/>
        <dbReference type="ChEBI" id="CHEBI:60392"/>
        <dbReference type="ChEBI" id="CHEBI:70758"/>
        <dbReference type="EC" id="2.7.8.13"/>
    </reaction>
</comment>
<comment type="cofactor">
    <cofactor evidence="1">
        <name>Mg(2+)</name>
        <dbReference type="ChEBI" id="CHEBI:18420"/>
    </cofactor>
</comment>
<comment type="pathway">
    <text evidence="1">Cell wall biogenesis; peptidoglycan biosynthesis.</text>
</comment>
<comment type="subcellular location">
    <subcellularLocation>
        <location evidence="1">Cell membrane</location>
        <topology evidence="1">Multi-pass membrane protein</topology>
    </subcellularLocation>
</comment>
<comment type="similarity">
    <text evidence="1">Belongs to the glycosyltransferase 4 family. MraY subfamily.</text>
</comment>
<keyword id="KW-0131">Cell cycle</keyword>
<keyword id="KW-0132">Cell division</keyword>
<keyword id="KW-1003">Cell membrane</keyword>
<keyword id="KW-0133">Cell shape</keyword>
<keyword id="KW-0961">Cell wall biogenesis/degradation</keyword>
<keyword id="KW-0460">Magnesium</keyword>
<keyword id="KW-0472">Membrane</keyword>
<keyword id="KW-0479">Metal-binding</keyword>
<keyword id="KW-0573">Peptidoglycan synthesis</keyword>
<keyword id="KW-1185">Reference proteome</keyword>
<keyword id="KW-0808">Transferase</keyword>
<keyword id="KW-0812">Transmembrane</keyword>
<keyword id="KW-1133">Transmembrane helix</keyword>
<feature type="chain" id="PRO_0000235454" description="Phospho-N-acetylmuramoyl-pentapeptide-transferase">
    <location>
        <begin position="1"/>
        <end position="322"/>
    </location>
</feature>
<feature type="transmembrane region" description="Helical" evidence="1">
    <location>
        <begin position="9"/>
        <end position="29"/>
    </location>
</feature>
<feature type="transmembrane region" description="Helical" evidence="1">
    <location>
        <begin position="54"/>
        <end position="74"/>
    </location>
</feature>
<feature type="transmembrane region" description="Helical" evidence="1">
    <location>
        <begin position="82"/>
        <end position="102"/>
    </location>
</feature>
<feature type="transmembrane region" description="Helical" evidence="1">
    <location>
        <begin position="122"/>
        <end position="142"/>
    </location>
</feature>
<feature type="transmembrane region" description="Helical" evidence="1">
    <location>
        <begin position="145"/>
        <end position="165"/>
    </location>
</feature>
<feature type="transmembrane region" description="Helical" evidence="1">
    <location>
        <begin position="176"/>
        <end position="196"/>
    </location>
</feature>
<feature type="transmembrane region" description="Helical" evidence="1">
    <location>
        <begin position="200"/>
        <end position="220"/>
    </location>
</feature>
<feature type="transmembrane region" description="Helical" evidence="1">
    <location>
        <begin position="227"/>
        <end position="247"/>
    </location>
</feature>
<feature type="transmembrane region" description="Helical" evidence="1">
    <location>
        <begin position="255"/>
        <end position="275"/>
    </location>
</feature>
<feature type="transmembrane region" description="Helical" evidence="1">
    <location>
        <begin position="302"/>
        <end position="322"/>
    </location>
</feature>
<reference key="1">
    <citation type="journal article" date="2005" name="Proc. Natl. Acad. Sci. U.S.A.">
        <title>Complete genome sequence of the probiotic lactic acid bacterium Lactobacillus acidophilus NCFM.</title>
        <authorList>
            <person name="Altermann E."/>
            <person name="Russell W.M."/>
            <person name="Azcarate-Peril M.A."/>
            <person name="Barrangou R."/>
            <person name="Buck B.L."/>
            <person name="McAuliffe O."/>
            <person name="Souther N."/>
            <person name="Dobson A."/>
            <person name="Duong T."/>
            <person name="Callanan M."/>
            <person name="Lick S."/>
            <person name="Hamrick A."/>
            <person name="Cano R."/>
            <person name="Klaenhammer T.R."/>
        </authorList>
    </citation>
    <scope>NUCLEOTIDE SEQUENCE [LARGE SCALE GENOMIC DNA]</scope>
    <source>
        <strain>ATCC 700396 / NCK56 / N2 / NCFM</strain>
    </source>
</reference>
<evidence type="ECO:0000255" key="1">
    <source>
        <dbReference type="HAMAP-Rule" id="MF_00038"/>
    </source>
</evidence>
<accession>Q5FKV4</accession>
<dbReference type="EC" id="2.7.8.13" evidence="1"/>
<dbReference type="EMBL" id="CP000033">
    <property type="protein sequence ID" value="AAV42670.1"/>
    <property type="molecule type" value="Genomic_DNA"/>
</dbReference>
<dbReference type="RefSeq" id="WP_003546795.1">
    <property type="nucleotide sequence ID" value="NC_006814.3"/>
</dbReference>
<dbReference type="RefSeq" id="YP_193701.1">
    <property type="nucleotide sequence ID" value="NC_006814.3"/>
</dbReference>
<dbReference type="SMR" id="Q5FKV4"/>
<dbReference type="STRING" id="272621.LBA0806"/>
<dbReference type="GeneID" id="93290070"/>
<dbReference type="KEGG" id="lac:LBA0806"/>
<dbReference type="PATRIC" id="fig|272621.13.peg.769"/>
<dbReference type="eggNOG" id="COG0472">
    <property type="taxonomic scope" value="Bacteria"/>
</dbReference>
<dbReference type="HOGENOM" id="CLU_023982_0_1_9"/>
<dbReference type="OrthoDB" id="9805475at2"/>
<dbReference type="BioCyc" id="LACI272621:G1G49-820-MONOMER"/>
<dbReference type="UniPathway" id="UPA00219"/>
<dbReference type="Proteomes" id="UP000006381">
    <property type="component" value="Chromosome"/>
</dbReference>
<dbReference type="GO" id="GO:0005886">
    <property type="term" value="C:plasma membrane"/>
    <property type="evidence" value="ECO:0007669"/>
    <property type="project" value="UniProtKB-SubCell"/>
</dbReference>
<dbReference type="GO" id="GO:0046872">
    <property type="term" value="F:metal ion binding"/>
    <property type="evidence" value="ECO:0007669"/>
    <property type="project" value="UniProtKB-KW"/>
</dbReference>
<dbReference type="GO" id="GO:0008963">
    <property type="term" value="F:phospho-N-acetylmuramoyl-pentapeptide-transferase activity"/>
    <property type="evidence" value="ECO:0007669"/>
    <property type="project" value="UniProtKB-UniRule"/>
</dbReference>
<dbReference type="GO" id="GO:0051301">
    <property type="term" value="P:cell division"/>
    <property type="evidence" value="ECO:0007669"/>
    <property type="project" value="UniProtKB-KW"/>
</dbReference>
<dbReference type="GO" id="GO:0071555">
    <property type="term" value="P:cell wall organization"/>
    <property type="evidence" value="ECO:0007669"/>
    <property type="project" value="UniProtKB-KW"/>
</dbReference>
<dbReference type="GO" id="GO:0009252">
    <property type="term" value="P:peptidoglycan biosynthetic process"/>
    <property type="evidence" value="ECO:0007669"/>
    <property type="project" value="UniProtKB-UniRule"/>
</dbReference>
<dbReference type="GO" id="GO:0008360">
    <property type="term" value="P:regulation of cell shape"/>
    <property type="evidence" value="ECO:0007669"/>
    <property type="project" value="UniProtKB-KW"/>
</dbReference>
<dbReference type="CDD" id="cd06852">
    <property type="entry name" value="GT_MraY"/>
    <property type="match status" value="1"/>
</dbReference>
<dbReference type="HAMAP" id="MF_00038">
    <property type="entry name" value="MraY"/>
    <property type="match status" value="1"/>
</dbReference>
<dbReference type="InterPro" id="IPR000715">
    <property type="entry name" value="Glycosyl_transferase_4"/>
</dbReference>
<dbReference type="InterPro" id="IPR003524">
    <property type="entry name" value="PNAcMuramoyl-5peptid_Trfase"/>
</dbReference>
<dbReference type="InterPro" id="IPR018480">
    <property type="entry name" value="PNAcMuramoyl-5peptid_Trfase_CS"/>
</dbReference>
<dbReference type="NCBIfam" id="TIGR00445">
    <property type="entry name" value="mraY"/>
    <property type="match status" value="1"/>
</dbReference>
<dbReference type="PANTHER" id="PTHR22926">
    <property type="entry name" value="PHOSPHO-N-ACETYLMURAMOYL-PENTAPEPTIDE-TRANSFERASE"/>
    <property type="match status" value="1"/>
</dbReference>
<dbReference type="PANTHER" id="PTHR22926:SF5">
    <property type="entry name" value="PHOSPHO-N-ACETYLMURAMOYL-PENTAPEPTIDE-TRANSFERASE HOMOLOG"/>
    <property type="match status" value="1"/>
</dbReference>
<dbReference type="Pfam" id="PF00953">
    <property type="entry name" value="Glycos_transf_4"/>
    <property type="match status" value="1"/>
</dbReference>
<dbReference type="Pfam" id="PF10555">
    <property type="entry name" value="MraY_sig1"/>
    <property type="match status" value="1"/>
</dbReference>
<dbReference type="PROSITE" id="PS01348">
    <property type="entry name" value="MRAY_2"/>
    <property type="match status" value="1"/>
</dbReference>
<gene>
    <name evidence="1" type="primary">mraY</name>
    <name type="ordered locus">LBA0806</name>
</gene>
<sequence>MSIMLASCIALVSSLVLTVIFLPVLINFMHSHHEGQEIRDEGPKWHQKKSGTPTMGGTIFVIAAVISVIWVAAWQHSLNKVVWILVISLLGYGIIGFLDDGIKLYYKRNLGLRAWQKLALQIIIAVVIVLIASSDHFQFGLYIPFAGVVHSIALFTIFIIFWLVGFSNAVNLSDGLDGLATGLSIVAYGTYAYIAFKQKNFAVLAFCMSVIGGLIAFFIFNHKPAKIFMGDAGSLALGGGLATVSIMLNRPWSLLLIGIVFVCETASVILQVISFQTTGKRIFKMTPIHHHFEMLGWSEWKVDIVFWLVGLICSILYLAIWG</sequence>
<name>MRAY_LACAC</name>
<protein>
    <recommendedName>
        <fullName evidence="1">Phospho-N-acetylmuramoyl-pentapeptide-transferase</fullName>
        <ecNumber evidence="1">2.7.8.13</ecNumber>
    </recommendedName>
    <alternativeName>
        <fullName evidence="1">UDP-MurNAc-pentapeptide phosphotransferase</fullName>
    </alternativeName>
</protein>